<evidence type="ECO:0000255" key="1">
    <source>
        <dbReference type="PROSITE-ProRule" id="PRU00978"/>
    </source>
</evidence>
<evidence type="ECO:0000256" key="2">
    <source>
        <dbReference type="SAM" id="MobiDB-lite"/>
    </source>
</evidence>
<evidence type="ECO:0000269" key="3">
    <source>
    </source>
</evidence>
<evidence type="ECO:0000269" key="4">
    <source>
    </source>
</evidence>
<evidence type="ECO:0000303" key="5">
    <source>
    </source>
</evidence>
<evidence type="ECO:0000303" key="6">
    <source>
    </source>
</evidence>
<evidence type="ECO:0000305" key="7"/>
<evidence type="ECO:0000312" key="8">
    <source>
        <dbReference type="EMBL" id="BAD45854.1"/>
    </source>
</evidence>
<evidence type="ECO:0000312" key="9">
    <source>
        <dbReference type="EMBL" id="BAF20195.1"/>
    </source>
</evidence>
<evidence type="ECO:0000312" key="10">
    <source>
        <dbReference type="EMBL" id="EEE66169.1"/>
    </source>
</evidence>
<proteinExistence type="evidence at transcript level"/>
<sequence>MMKKCPSELQLEAFIREEAGAGDRKPGVLSPGDGARKSGLFSPGDGEMSVLDQSTLDGSGGGHQLWWPESVRTPPRAAAAFSATADERTPASISDDPKPTTSANHAPESDSDSDCDSLLEAERSPRLRGTKSTETKRIRRMVSNRESARRSRRRKQAQLSELESQVEQLKGENSSLFKQLTESSQQFNTAVTDNRILKSDVEALRVKVKMAEDMVARAAMSCGLGQLGLAPLLSSRKMCQALDMLSLPRNDACGFKGLNLGRQVQNSPVQSAASLESLDNRISSEVTSCSADVWP</sequence>
<gene>
    <name evidence="5" type="primary">RISBZ5</name>
    <name evidence="6" type="synonym">BZIP52</name>
    <name evidence="9" type="ordered locus">Os06g0662200</name>
    <name evidence="7" type="ordered locus">LOC_Os06g45140</name>
    <name evidence="10" type="ORF">OsJ_22252</name>
    <name evidence="8" type="ORF">OSJNBb0065C04.12</name>
</gene>
<protein>
    <recommendedName>
        <fullName evidence="7">bZIP transcription factor RISBZ5</fullName>
    </recommendedName>
    <alternativeName>
        <fullName evidence="7">Rice seed bZIP5</fullName>
    </alternativeName>
    <alternativeName>
        <fullName evidence="6">bZIP transcription factor 52</fullName>
        <shortName evidence="6">OsbZIP52</shortName>
    </alternativeName>
</protein>
<comment type="function">
    <text evidence="3 4">Probable transcription factor that binds to the DNA specific sequence 5'-TGAGTCA-3' found in seed storage protein gene promoters (PubMed:11133985). May function as a negative regulator in cold and drought stress responses (PubMed:22189955).</text>
</comment>
<comment type="subunit">
    <text evidence="4">Homodimer.</text>
</comment>
<comment type="subcellular location">
    <subcellularLocation>
        <location evidence="1 4">Nucleus</location>
    </subcellularLocation>
</comment>
<comment type="developmental stage">
    <text evidence="3">Expressed in developing seeds at low levels from 5 to 20 days after flowering (DAF).</text>
</comment>
<comment type="induction">
    <text evidence="4">Induced by cold stress in roots.</text>
</comment>
<comment type="miscellaneous">
    <text evidence="4">Plants over-expressing RISBZ5/BZIP52 showed significantly increased sensitivity to cold and drought stresses.</text>
</comment>
<name>RSBZ5_ORYSJ</name>
<organism>
    <name type="scientific">Oryza sativa subsp. japonica</name>
    <name type="common">Rice</name>
    <dbReference type="NCBI Taxonomy" id="39947"/>
    <lineage>
        <taxon>Eukaryota</taxon>
        <taxon>Viridiplantae</taxon>
        <taxon>Streptophyta</taxon>
        <taxon>Embryophyta</taxon>
        <taxon>Tracheophyta</taxon>
        <taxon>Spermatophyta</taxon>
        <taxon>Magnoliopsida</taxon>
        <taxon>Liliopsida</taxon>
        <taxon>Poales</taxon>
        <taxon>Poaceae</taxon>
        <taxon>BOP clade</taxon>
        <taxon>Oryzoideae</taxon>
        <taxon>Oryzeae</taxon>
        <taxon>Oryzinae</taxon>
        <taxon>Oryza</taxon>
        <taxon>Oryza sativa</taxon>
    </lineage>
</organism>
<keyword id="KW-0238">DNA-binding</keyword>
<keyword id="KW-0539">Nucleus</keyword>
<keyword id="KW-1185">Reference proteome</keyword>
<keyword id="KW-0346">Stress response</keyword>
<keyword id="KW-0804">Transcription</keyword>
<keyword id="KW-0805">Transcription regulation</keyword>
<dbReference type="EMBL" id="AB053474">
    <property type="protein sequence ID" value="BAB39175.1"/>
    <property type="molecule type" value="mRNA"/>
</dbReference>
<dbReference type="EMBL" id="AP004744">
    <property type="protein sequence ID" value="BAD45854.1"/>
    <property type="molecule type" value="Genomic_DNA"/>
</dbReference>
<dbReference type="EMBL" id="AP008212">
    <property type="protein sequence ID" value="BAF20195.1"/>
    <property type="molecule type" value="Genomic_DNA"/>
</dbReference>
<dbReference type="EMBL" id="AP014962">
    <property type="protein sequence ID" value="BAS98995.1"/>
    <property type="molecule type" value="Genomic_DNA"/>
</dbReference>
<dbReference type="EMBL" id="CM000143">
    <property type="protein sequence ID" value="EEE66169.1"/>
    <property type="molecule type" value="Genomic_DNA"/>
</dbReference>
<dbReference type="RefSeq" id="XP_015643805.1">
    <property type="nucleotide sequence ID" value="XM_015788319.1"/>
</dbReference>
<dbReference type="SMR" id="Q654B3"/>
<dbReference type="FunCoup" id="Q654B3">
    <property type="interactions" value="14"/>
</dbReference>
<dbReference type="STRING" id="39947.Q654B3"/>
<dbReference type="PaxDb" id="39947-Q654B3"/>
<dbReference type="EnsemblPlants" id="Os06t0662200-01">
    <property type="protein sequence ID" value="Os06t0662200-01"/>
    <property type="gene ID" value="Os06g0662200"/>
</dbReference>
<dbReference type="Gramene" id="Os06t0662200-01">
    <property type="protein sequence ID" value="Os06t0662200-01"/>
    <property type="gene ID" value="Os06g0662200"/>
</dbReference>
<dbReference type="KEGG" id="dosa:Os06g0662200"/>
<dbReference type="eggNOG" id="ENOG502QS0A">
    <property type="taxonomic scope" value="Eukaryota"/>
</dbReference>
<dbReference type="HOGENOM" id="CLU_057781_0_0_1"/>
<dbReference type="InParanoid" id="Q654B3"/>
<dbReference type="OMA" id="NAGHVWW"/>
<dbReference type="OrthoDB" id="1299653at2759"/>
<dbReference type="Proteomes" id="UP000000763">
    <property type="component" value="Chromosome 6"/>
</dbReference>
<dbReference type="Proteomes" id="UP000007752">
    <property type="component" value="Chromosome 6"/>
</dbReference>
<dbReference type="Proteomes" id="UP000059680">
    <property type="component" value="Chromosome 6"/>
</dbReference>
<dbReference type="GO" id="GO:0005634">
    <property type="term" value="C:nucleus"/>
    <property type="evidence" value="ECO:0007669"/>
    <property type="project" value="UniProtKB-SubCell"/>
</dbReference>
<dbReference type="GO" id="GO:0003677">
    <property type="term" value="F:DNA binding"/>
    <property type="evidence" value="ECO:0007669"/>
    <property type="project" value="UniProtKB-KW"/>
</dbReference>
<dbReference type="GO" id="GO:0003700">
    <property type="term" value="F:DNA-binding transcription factor activity"/>
    <property type="evidence" value="ECO:0007669"/>
    <property type="project" value="InterPro"/>
</dbReference>
<dbReference type="FunFam" id="1.20.5.170:FF:000020">
    <property type="entry name" value="BZIP transcription factor"/>
    <property type="match status" value="1"/>
</dbReference>
<dbReference type="Gene3D" id="1.20.5.170">
    <property type="match status" value="1"/>
</dbReference>
<dbReference type="InterPro" id="IPR004827">
    <property type="entry name" value="bZIP"/>
</dbReference>
<dbReference type="InterPro" id="IPR046347">
    <property type="entry name" value="bZIP_sf"/>
</dbReference>
<dbReference type="InterPro" id="IPR044168">
    <property type="entry name" value="RISBZ3/4/5"/>
</dbReference>
<dbReference type="PANTHER" id="PTHR47693">
    <property type="entry name" value="BZIP TRANSCRIPTION FACTOR RISBZ3-RELATED"/>
    <property type="match status" value="1"/>
</dbReference>
<dbReference type="PANTHER" id="PTHR47693:SF2">
    <property type="entry name" value="BZIP TRANSCRIPTION FACTOR RISBZ5"/>
    <property type="match status" value="1"/>
</dbReference>
<dbReference type="Pfam" id="PF00170">
    <property type="entry name" value="bZIP_1"/>
    <property type="match status" value="1"/>
</dbReference>
<dbReference type="SMART" id="SM00338">
    <property type="entry name" value="BRLZ"/>
    <property type="match status" value="1"/>
</dbReference>
<dbReference type="SUPFAM" id="SSF57959">
    <property type="entry name" value="Leucine zipper domain"/>
    <property type="match status" value="1"/>
</dbReference>
<dbReference type="PROSITE" id="PS50217">
    <property type="entry name" value="BZIP"/>
    <property type="match status" value="1"/>
</dbReference>
<dbReference type="PROSITE" id="PS00036">
    <property type="entry name" value="BZIP_BASIC"/>
    <property type="match status" value="1"/>
</dbReference>
<reference key="1">
    <citation type="journal article" date="2001" name="J. Biol. Chem.">
        <title>A rice functional transcriptional activator, RISBZ1, responsible for endosperm-specific expression of storage protein genes through GCN4 motif.</title>
        <authorList>
            <person name="Onodera Y."/>
            <person name="Suzuki A."/>
            <person name="Wu C.Y."/>
            <person name="Washida H."/>
            <person name="Takaiwa F."/>
        </authorList>
    </citation>
    <scope>NUCLEOTIDE SEQUENCE [MRNA]</scope>
    <scope>FUNCTION</scope>
    <scope>DEVELOPMENTAL STAGE</scope>
</reference>
<reference key="2">
    <citation type="journal article" date="2005" name="Nature">
        <title>The map-based sequence of the rice genome.</title>
        <authorList>
            <consortium name="International rice genome sequencing project (IRGSP)"/>
        </authorList>
    </citation>
    <scope>NUCLEOTIDE SEQUENCE [LARGE SCALE GENOMIC DNA]</scope>
    <source>
        <strain>cv. Nipponbare</strain>
    </source>
</reference>
<reference key="3">
    <citation type="journal article" date="2008" name="Nucleic Acids Res.">
        <title>The rice annotation project database (RAP-DB): 2008 update.</title>
        <authorList>
            <consortium name="The rice annotation project (RAP)"/>
        </authorList>
    </citation>
    <scope>GENOME REANNOTATION</scope>
    <source>
        <strain>cv. Nipponbare</strain>
    </source>
</reference>
<reference key="4">
    <citation type="journal article" date="2013" name="Rice">
        <title>Improvement of the Oryza sativa Nipponbare reference genome using next generation sequence and optical map data.</title>
        <authorList>
            <person name="Kawahara Y."/>
            <person name="de la Bastide M."/>
            <person name="Hamilton J.P."/>
            <person name="Kanamori H."/>
            <person name="McCombie W.R."/>
            <person name="Ouyang S."/>
            <person name="Schwartz D.C."/>
            <person name="Tanaka T."/>
            <person name="Wu J."/>
            <person name="Zhou S."/>
            <person name="Childs K.L."/>
            <person name="Davidson R.M."/>
            <person name="Lin H."/>
            <person name="Quesada-Ocampo L."/>
            <person name="Vaillancourt B."/>
            <person name="Sakai H."/>
            <person name="Lee S.S."/>
            <person name="Kim J."/>
            <person name="Numa H."/>
            <person name="Itoh T."/>
            <person name="Buell C.R."/>
            <person name="Matsumoto T."/>
        </authorList>
    </citation>
    <scope>GENOME REANNOTATION</scope>
    <source>
        <strain>cv. Nipponbare</strain>
    </source>
</reference>
<reference key="5">
    <citation type="journal article" date="2005" name="PLoS Biol.">
        <title>The genomes of Oryza sativa: a history of duplications.</title>
        <authorList>
            <person name="Yu J."/>
            <person name="Wang J."/>
            <person name="Lin W."/>
            <person name="Li S."/>
            <person name="Li H."/>
            <person name="Zhou J."/>
            <person name="Ni P."/>
            <person name="Dong W."/>
            <person name="Hu S."/>
            <person name="Zeng C."/>
            <person name="Zhang J."/>
            <person name="Zhang Y."/>
            <person name="Li R."/>
            <person name="Xu Z."/>
            <person name="Li S."/>
            <person name="Li X."/>
            <person name="Zheng H."/>
            <person name="Cong L."/>
            <person name="Lin L."/>
            <person name="Yin J."/>
            <person name="Geng J."/>
            <person name="Li G."/>
            <person name="Shi J."/>
            <person name="Liu J."/>
            <person name="Lv H."/>
            <person name="Li J."/>
            <person name="Wang J."/>
            <person name="Deng Y."/>
            <person name="Ran L."/>
            <person name="Shi X."/>
            <person name="Wang X."/>
            <person name="Wu Q."/>
            <person name="Li C."/>
            <person name="Ren X."/>
            <person name="Wang J."/>
            <person name="Wang X."/>
            <person name="Li D."/>
            <person name="Liu D."/>
            <person name="Zhang X."/>
            <person name="Ji Z."/>
            <person name="Zhao W."/>
            <person name="Sun Y."/>
            <person name="Zhang Z."/>
            <person name="Bao J."/>
            <person name="Han Y."/>
            <person name="Dong L."/>
            <person name="Ji J."/>
            <person name="Chen P."/>
            <person name="Wu S."/>
            <person name="Liu J."/>
            <person name="Xiao Y."/>
            <person name="Bu D."/>
            <person name="Tan J."/>
            <person name="Yang L."/>
            <person name="Ye C."/>
            <person name="Zhang J."/>
            <person name="Xu J."/>
            <person name="Zhou Y."/>
            <person name="Yu Y."/>
            <person name="Zhang B."/>
            <person name="Zhuang S."/>
            <person name="Wei H."/>
            <person name="Liu B."/>
            <person name="Lei M."/>
            <person name="Yu H."/>
            <person name="Li Y."/>
            <person name="Xu H."/>
            <person name="Wei S."/>
            <person name="He X."/>
            <person name="Fang L."/>
            <person name="Zhang Z."/>
            <person name="Zhang Y."/>
            <person name="Huang X."/>
            <person name="Su Z."/>
            <person name="Tong W."/>
            <person name="Li J."/>
            <person name="Tong Z."/>
            <person name="Li S."/>
            <person name="Ye J."/>
            <person name="Wang L."/>
            <person name="Fang L."/>
            <person name="Lei T."/>
            <person name="Chen C.-S."/>
            <person name="Chen H.-C."/>
            <person name="Xu Z."/>
            <person name="Li H."/>
            <person name="Huang H."/>
            <person name="Zhang F."/>
            <person name="Xu H."/>
            <person name="Li N."/>
            <person name="Zhao C."/>
            <person name="Li S."/>
            <person name="Dong L."/>
            <person name="Huang Y."/>
            <person name="Li L."/>
            <person name="Xi Y."/>
            <person name="Qi Q."/>
            <person name="Li W."/>
            <person name="Zhang B."/>
            <person name="Hu W."/>
            <person name="Zhang Y."/>
            <person name="Tian X."/>
            <person name="Jiao Y."/>
            <person name="Liang X."/>
            <person name="Jin J."/>
            <person name="Gao L."/>
            <person name="Zheng W."/>
            <person name="Hao B."/>
            <person name="Liu S.-M."/>
            <person name="Wang W."/>
            <person name="Yuan L."/>
            <person name="Cao M."/>
            <person name="McDermott J."/>
            <person name="Samudrala R."/>
            <person name="Wang J."/>
            <person name="Wong G.K.-S."/>
            <person name="Yang H."/>
        </authorList>
    </citation>
    <scope>NUCLEOTIDE SEQUENCE [LARGE SCALE GENOMIC DNA]</scope>
    <source>
        <strain>cv. Nipponbare</strain>
    </source>
</reference>
<reference key="6">
    <citation type="journal article" date="2008" name="Plant Physiol.">
        <title>Genomic survey and gene expression analysis of the basic leucine zipper transcription factor family in rice.</title>
        <authorList>
            <person name="Nijhawan A."/>
            <person name="Jain M."/>
            <person name="Tyagi A.K."/>
            <person name="Khurana J.P."/>
        </authorList>
    </citation>
    <scope>GENE FAMILY</scope>
    <scope>NOMENCLATURE</scope>
</reference>
<reference key="7">
    <citation type="journal article" date="2012" name="Planta">
        <title>bZIP transcription factor OsbZIP52/RISBZ5: a potential negative regulator of cold and drought stress response in rice.</title>
        <authorList>
            <person name="Liu C."/>
            <person name="Wu Y."/>
            <person name="Wang X."/>
        </authorList>
    </citation>
    <scope>FUNCTION</scope>
    <scope>HOMODIMERIZATION</scope>
    <scope>SUBCELLULAR LOCATION</scope>
    <scope>INDUCTION BY COLD STRESS</scope>
</reference>
<feature type="chain" id="PRO_0000441226" description="bZIP transcription factor RISBZ5">
    <location>
        <begin position="1"/>
        <end position="295"/>
    </location>
</feature>
<feature type="domain" description="bZIP" evidence="1">
    <location>
        <begin position="134"/>
        <end position="197"/>
    </location>
</feature>
<feature type="region of interest" description="Disordered" evidence="2">
    <location>
        <begin position="16"/>
        <end position="157"/>
    </location>
</feature>
<feature type="region of interest" description="Basic motif" evidence="1">
    <location>
        <begin position="136"/>
        <end position="155"/>
    </location>
</feature>
<feature type="region of interest" description="Leucine-zipper" evidence="1">
    <location>
        <begin position="162"/>
        <end position="176"/>
    </location>
</feature>
<feature type="compositionally biased region" description="Basic and acidic residues" evidence="2">
    <location>
        <begin position="16"/>
        <end position="26"/>
    </location>
</feature>
<feature type="compositionally biased region" description="Acidic residues" evidence="2">
    <location>
        <begin position="109"/>
        <end position="119"/>
    </location>
</feature>
<feature type="compositionally biased region" description="Basic and acidic residues" evidence="2">
    <location>
        <begin position="120"/>
        <end position="136"/>
    </location>
</feature>
<accession>Q654B3</accession>
<accession>Q9AVC9</accession>